<proteinExistence type="inferred from homology"/>
<name>SYY_MESH2</name>
<sequence>MSYIEKQEFLTELKTRNILKDISSPEKFFNLKPDQGIYIGFDPTATSLHLGNYISISLLKRLQKIGIKVLAVIGGATGMIGDPSFSSKERKLLDFKTLNANKEKIKKQLESFGLPVFDNFEIYKNMNILDFLRDVGKNINISYLLAKESVASRIEVGLSFTEFSYQLIQGWDFKFLAENYQIIGQAGGSDQWGNMVTGLDFIKKSNLVQKDEAFVFTTNLLTDENGQKFGKSLGKPIWLDPEMYSPFHLYQFLLNQNDEQAEKIMLWLSFLDLKVINELIFKHKNDKKQRILQYNLAQEVVFNIHGDKGLKIAKKITKILFEKLDYTEITFKDKLELKKIIPYFKVSFFNANQIIDLGIFKSKRELNEFISHKALEINGSKISNIGDITEELKDKSNLFLLRKGKKYFFIIELI</sequence>
<gene>
    <name evidence="1" type="primary">tyrS</name>
    <name type="ordered locus">mhp066</name>
</gene>
<dbReference type="EC" id="6.1.1.1" evidence="1"/>
<dbReference type="EMBL" id="AE017332">
    <property type="protein sequence ID" value="AAV27390.1"/>
    <property type="molecule type" value="Genomic_DNA"/>
</dbReference>
<dbReference type="RefSeq" id="WP_011205904.1">
    <property type="nucleotide sequence ID" value="NC_006360.1"/>
</dbReference>
<dbReference type="SMR" id="Q601Y5"/>
<dbReference type="GeneID" id="41334348"/>
<dbReference type="KEGG" id="mhy:mhp066"/>
<dbReference type="eggNOG" id="COG0162">
    <property type="taxonomic scope" value="Bacteria"/>
</dbReference>
<dbReference type="HOGENOM" id="CLU_024003_0_2_14"/>
<dbReference type="PhylomeDB" id="Q601Y5"/>
<dbReference type="Proteomes" id="UP000006822">
    <property type="component" value="Chromosome"/>
</dbReference>
<dbReference type="GO" id="GO:0005829">
    <property type="term" value="C:cytosol"/>
    <property type="evidence" value="ECO:0007669"/>
    <property type="project" value="TreeGrafter"/>
</dbReference>
<dbReference type="GO" id="GO:0005524">
    <property type="term" value="F:ATP binding"/>
    <property type="evidence" value="ECO:0007669"/>
    <property type="project" value="UniProtKB-UniRule"/>
</dbReference>
<dbReference type="GO" id="GO:0003723">
    <property type="term" value="F:RNA binding"/>
    <property type="evidence" value="ECO:0007669"/>
    <property type="project" value="UniProtKB-KW"/>
</dbReference>
<dbReference type="GO" id="GO:0004831">
    <property type="term" value="F:tyrosine-tRNA ligase activity"/>
    <property type="evidence" value="ECO:0007669"/>
    <property type="project" value="UniProtKB-UniRule"/>
</dbReference>
<dbReference type="GO" id="GO:0006437">
    <property type="term" value="P:tyrosyl-tRNA aminoacylation"/>
    <property type="evidence" value="ECO:0007669"/>
    <property type="project" value="UniProtKB-UniRule"/>
</dbReference>
<dbReference type="CDD" id="cd00805">
    <property type="entry name" value="TyrRS_core"/>
    <property type="match status" value="1"/>
</dbReference>
<dbReference type="FunFam" id="1.10.240.10:FF:000001">
    <property type="entry name" value="Tyrosine--tRNA ligase"/>
    <property type="match status" value="1"/>
</dbReference>
<dbReference type="Gene3D" id="3.40.50.620">
    <property type="entry name" value="HUPs"/>
    <property type="match status" value="1"/>
</dbReference>
<dbReference type="Gene3D" id="3.10.290.10">
    <property type="entry name" value="RNA-binding S4 domain"/>
    <property type="match status" value="1"/>
</dbReference>
<dbReference type="Gene3D" id="1.10.240.10">
    <property type="entry name" value="Tyrosyl-Transfer RNA Synthetase"/>
    <property type="match status" value="1"/>
</dbReference>
<dbReference type="HAMAP" id="MF_02006">
    <property type="entry name" value="Tyr_tRNA_synth_type1"/>
    <property type="match status" value="1"/>
</dbReference>
<dbReference type="InterPro" id="IPR002305">
    <property type="entry name" value="aa-tRNA-synth_Ic"/>
</dbReference>
<dbReference type="InterPro" id="IPR014729">
    <property type="entry name" value="Rossmann-like_a/b/a_fold"/>
</dbReference>
<dbReference type="InterPro" id="IPR036986">
    <property type="entry name" value="S4_RNA-bd_sf"/>
</dbReference>
<dbReference type="InterPro" id="IPR054608">
    <property type="entry name" value="SYY-like_C"/>
</dbReference>
<dbReference type="InterPro" id="IPR002307">
    <property type="entry name" value="Tyr-tRNA-ligase"/>
</dbReference>
<dbReference type="InterPro" id="IPR024088">
    <property type="entry name" value="Tyr-tRNA-ligase_bac-type"/>
</dbReference>
<dbReference type="InterPro" id="IPR024107">
    <property type="entry name" value="Tyr-tRNA-ligase_bac_1"/>
</dbReference>
<dbReference type="NCBIfam" id="TIGR00234">
    <property type="entry name" value="tyrS"/>
    <property type="match status" value="1"/>
</dbReference>
<dbReference type="PANTHER" id="PTHR11766:SF0">
    <property type="entry name" value="TYROSINE--TRNA LIGASE, MITOCHONDRIAL"/>
    <property type="match status" value="1"/>
</dbReference>
<dbReference type="PANTHER" id="PTHR11766">
    <property type="entry name" value="TYROSYL-TRNA SYNTHETASE"/>
    <property type="match status" value="1"/>
</dbReference>
<dbReference type="Pfam" id="PF22421">
    <property type="entry name" value="SYY_C-terminal"/>
    <property type="match status" value="1"/>
</dbReference>
<dbReference type="Pfam" id="PF00579">
    <property type="entry name" value="tRNA-synt_1b"/>
    <property type="match status" value="1"/>
</dbReference>
<dbReference type="PRINTS" id="PR01040">
    <property type="entry name" value="TRNASYNTHTYR"/>
</dbReference>
<dbReference type="SUPFAM" id="SSF55174">
    <property type="entry name" value="Alpha-L RNA-binding motif"/>
    <property type="match status" value="1"/>
</dbReference>
<dbReference type="SUPFAM" id="SSF52374">
    <property type="entry name" value="Nucleotidylyl transferase"/>
    <property type="match status" value="1"/>
</dbReference>
<reference key="1">
    <citation type="journal article" date="2004" name="J. Bacteriol.">
        <title>The genome sequence of Mycoplasma hyopneumoniae strain 232, the agent of swine mycoplasmosis.</title>
        <authorList>
            <person name="Minion F.C."/>
            <person name="Lefkowitz E.J."/>
            <person name="Madsen M.L."/>
            <person name="Cleary B.J."/>
            <person name="Swartzell S.M."/>
            <person name="Mahairas G.G."/>
        </authorList>
    </citation>
    <scope>NUCLEOTIDE SEQUENCE [LARGE SCALE GENOMIC DNA]</scope>
    <source>
        <strain>232</strain>
    </source>
</reference>
<comment type="function">
    <text evidence="1">Catalyzes the attachment of tyrosine to tRNA(Tyr) in a two-step reaction: tyrosine is first activated by ATP to form Tyr-AMP and then transferred to the acceptor end of tRNA(Tyr).</text>
</comment>
<comment type="catalytic activity">
    <reaction evidence="1">
        <text>tRNA(Tyr) + L-tyrosine + ATP = L-tyrosyl-tRNA(Tyr) + AMP + diphosphate + H(+)</text>
        <dbReference type="Rhea" id="RHEA:10220"/>
        <dbReference type="Rhea" id="RHEA-COMP:9706"/>
        <dbReference type="Rhea" id="RHEA-COMP:9707"/>
        <dbReference type="ChEBI" id="CHEBI:15378"/>
        <dbReference type="ChEBI" id="CHEBI:30616"/>
        <dbReference type="ChEBI" id="CHEBI:33019"/>
        <dbReference type="ChEBI" id="CHEBI:58315"/>
        <dbReference type="ChEBI" id="CHEBI:78442"/>
        <dbReference type="ChEBI" id="CHEBI:78536"/>
        <dbReference type="ChEBI" id="CHEBI:456215"/>
        <dbReference type="EC" id="6.1.1.1"/>
    </reaction>
</comment>
<comment type="subunit">
    <text evidence="1">Homodimer.</text>
</comment>
<comment type="subcellular location">
    <subcellularLocation>
        <location evidence="1">Cytoplasm</location>
    </subcellularLocation>
</comment>
<comment type="similarity">
    <text evidence="1">Belongs to the class-I aminoacyl-tRNA synthetase family. TyrS type 1 subfamily.</text>
</comment>
<protein>
    <recommendedName>
        <fullName evidence="1">Tyrosine--tRNA ligase</fullName>
        <ecNumber evidence="1">6.1.1.1</ecNumber>
    </recommendedName>
    <alternativeName>
        <fullName evidence="1">Tyrosyl-tRNA synthetase</fullName>
        <shortName evidence="1">TyrRS</shortName>
    </alternativeName>
</protein>
<feature type="chain" id="PRO_0000234731" description="Tyrosine--tRNA ligase">
    <location>
        <begin position="1"/>
        <end position="414"/>
    </location>
</feature>
<feature type="domain" description="S4 RNA-binding" evidence="1">
    <location>
        <begin position="349"/>
        <end position="414"/>
    </location>
</feature>
<feature type="short sequence motif" description="'HIGH' region">
    <location>
        <begin position="43"/>
        <end position="52"/>
    </location>
</feature>
<feature type="short sequence motif" description="'KMSKS' region">
    <location>
        <begin position="228"/>
        <end position="232"/>
    </location>
</feature>
<feature type="binding site" evidence="1">
    <location>
        <position position="38"/>
    </location>
    <ligand>
        <name>L-tyrosine</name>
        <dbReference type="ChEBI" id="CHEBI:58315"/>
    </ligand>
</feature>
<feature type="binding site" evidence="1">
    <location>
        <position position="165"/>
    </location>
    <ligand>
        <name>L-tyrosine</name>
        <dbReference type="ChEBI" id="CHEBI:58315"/>
    </ligand>
</feature>
<feature type="binding site" evidence="1">
    <location>
        <position position="169"/>
    </location>
    <ligand>
        <name>L-tyrosine</name>
        <dbReference type="ChEBI" id="CHEBI:58315"/>
    </ligand>
</feature>
<feature type="binding site" evidence="1">
    <location>
        <position position="231"/>
    </location>
    <ligand>
        <name>ATP</name>
        <dbReference type="ChEBI" id="CHEBI:30616"/>
    </ligand>
</feature>
<keyword id="KW-0030">Aminoacyl-tRNA synthetase</keyword>
<keyword id="KW-0067">ATP-binding</keyword>
<keyword id="KW-0963">Cytoplasm</keyword>
<keyword id="KW-0436">Ligase</keyword>
<keyword id="KW-0547">Nucleotide-binding</keyword>
<keyword id="KW-0648">Protein biosynthesis</keyword>
<keyword id="KW-0694">RNA-binding</keyword>
<evidence type="ECO:0000255" key="1">
    <source>
        <dbReference type="HAMAP-Rule" id="MF_02006"/>
    </source>
</evidence>
<organism>
    <name type="scientific">Mesomycoplasma hyopneumoniae (strain 232)</name>
    <name type="common">Mycoplasma hyopneumoniae</name>
    <dbReference type="NCBI Taxonomy" id="295358"/>
    <lineage>
        <taxon>Bacteria</taxon>
        <taxon>Bacillati</taxon>
        <taxon>Mycoplasmatota</taxon>
        <taxon>Mycoplasmoidales</taxon>
        <taxon>Metamycoplasmataceae</taxon>
        <taxon>Mesomycoplasma</taxon>
    </lineage>
</organism>
<accession>Q601Y5</accession>